<proteinExistence type="inferred from homology"/>
<dbReference type="EMBL" id="CP000820">
    <property type="protein sequence ID" value="ABW15136.1"/>
    <property type="molecule type" value="Genomic_DNA"/>
</dbReference>
<dbReference type="RefSeq" id="WP_018502565.1">
    <property type="nucleotide sequence ID" value="NC_009921.1"/>
</dbReference>
<dbReference type="SMR" id="A8L8M0"/>
<dbReference type="STRING" id="298653.Franean1_5790"/>
<dbReference type="KEGG" id="fre:Franean1_5790"/>
<dbReference type="eggNOG" id="COG0691">
    <property type="taxonomic scope" value="Bacteria"/>
</dbReference>
<dbReference type="HOGENOM" id="CLU_108953_2_1_11"/>
<dbReference type="GO" id="GO:0005829">
    <property type="term" value="C:cytosol"/>
    <property type="evidence" value="ECO:0007669"/>
    <property type="project" value="TreeGrafter"/>
</dbReference>
<dbReference type="GO" id="GO:0003723">
    <property type="term" value="F:RNA binding"/>
    <property type="evidence" value="ECO:0007669"/>
    <property type="project" value="UniProtKB-UniRule"/>
</dbReference>
<dbReference type="GO" id="GO:0070929">
    <property type="term" value="P:trans-translation"/>
    <property type="evidence" value="ECO:0007669"/>
    <property type="project" value="UniProtKB-UniRule"/>
</dbReference>
<dbReference type="CDD" id="cd09294">
    <property type="entry name" value="SmpB"/>
    <property type="match status" value="1"/>
</dbReference>
<dbReference type="Gene3D" id="2.40.280.10">
    <property type="match status" value="1"/>
</dbReference>
<dbReference type="HAMAP" id="MF_00023">
    <property type="entry name" value="SmpB"/>
    <property type="match status" value="1"/>
</dbReference>
<dbReference type="InterPro" id="IPR023620">
    <property type="entry name" value="SmpB"/>
</dbReference>
<dbReference type="InterPro" id="IPR000037">
    <property type="entry name" value="SsrA-bd_prot"/>
</dbReference>
<dbReference type="InterPro" id="IPR020081">
    <property type="entry name" value="SsrA-bd_prot_CS"/>
</dbReference>
<dbReference type="NCBIfam" id="NF003843">
    <property type="entry name" value="PRK05422.1"/>
    <property type="match status" value="1"/>
</dbReference>
<dbReference type="NCBIfam" id="TIGR00086">
    <property type="entry name" value="smpB"/>
    <property type="match status" value="1"/>
</dbReference>
<dbReference type="PANTHER" id="PTHR30308:SF2">
    <property type="entry name" value="SSRA-BINDING PROTEIN"/>
    <property type="match status" value="1"/>
</dbReference>
<dbReference type="PANTHER" id="PTHR30308">
    <property type="entry name" value="TMRNA-BINDING COMPONENT OF TRANS-TRANSLATION TAGGING COMPLEX"/>
    <property type="match status" value="1"/>
</dbReference>
<dbReference type="Pfam" id="PF01668">
    <property type="entry name" value="SmpB"/>
    <property type="match status" value="1"/>
</dbReference>
<dbReference type="SUPFAM" id="SSF74982">
    <property type="entry name" value="Small protein B (SmpB)"/>
    <property type="match status" value="1"/>
</dbReference>
<dbReference type="PROSITE" id="PS01317">
    <property type="entry name" value="SSRP"/>
    <property type="match status" value="1"/>
</dbReference>
<keyword id="KW-0963">Cytoplasm</keyword>
<keyword id="KW-0694">RNA-binding</keyword>
<name>SSRP_PARS2</name>
<accession>A8L8M0</accession>
<reference key="1">
    <citation type="journal article" date="2007" name="Genome Res.">
        <title>Genome characteristics of facultatively symbiotic Frankia sp. strains reflect host range and host plant biogeography.</title>
        <authorList>
            <person name="Normand P."/>
            <person name="Lapierre P."/>
            <person name="Tisa L.S."/>
            <person name="Gogarten J.P."/>
            <person name="Alloisio N."/>
            <person name="Bagnarol E."/>
            <person name="Bassi C.A."/>
            <person name="Berry A.M."/>
            <person name="Bickhart D.M."/>
            <person name="Choisne N."/>
            <person name="Couloux A."/>
            <person name="Cournoyer B."/>
            <person name="Cruveiller S."/>
            <person name="Daubin V."/>
            <person name="Demange N."/>
            <person name="Francino M.P."/>
            <person name="Goltsman E."/>
            <person name="Huang Y."/>
            <person name="Kopp O.R."/>
            <person name="Labarre L."/>
            <person name="Lapidus A."/>
            <person name="Lavire C."/>
            <person name="Marechal J."/>
            <person name="Martinez M."/>
            <person name="Mastronunzio J.E."/>
            <person name="Mullin B.C."/>
            <person name="Niemann J."/>
            <person name="Pujic P."/>
            <person name="Rawnsley T."/>
            <person name="Rouy Z."/>
            <person name="Schenowitz C."/>
            <person name="Sellstedt A."/>
            <person name="Tavares F."/>
            <person name="Tomkins J.P."/>
            <person name="Vallenet D."/>
            <person name="Valverde C."/>
            <person name="Wall L.G."/>
            <person name="Wang Y."/>
            <person name="Medigue C."/>
            <person name="Benson D.R."/>
        </authorList>
    </citation>
    <scope>NUCLEOTIDE SEQUENCE [LARGE SCALE GENOMIC DNA]</scope>
    <source>
        <strain>EAN1pec</strain>
    </source>
</reference>
<feature type="chain" id="PRO_1000090152" description="SsrA-binding protein">
    <location>
        <begin position="1"/>
        <end position="158"/>
    </location>
</feature>
<gene>
    <name evidence="1" type="primary">smpB</name>
    <name type="ordered locus">Franean1_5790</name>
</gene>
<protein>
    <recommendedName>
        <fullName evidence="1">SsrA-binding protein</fullName>
    </recommendedName>
    <alternativeName>
        <fullName evidence="1">Small protein B</fullName>
    </alternativeName>
</protein>
<organism>
    <name type="scientific">Parafrankia sp. (strain EAN1pec)</name>
    <dbReference type="NCBI Taxonomy" id="298653"/>
    <lineage>
        <taxon>Bacteria</taxon>
        <taxon>Bacillati</taxon>
        <taxon>Actinomycetota</taxon>
        <taxon>Actinomycetes</taxon>
        <taxon>Frankiales</taxon>
        <taxon>Frankiaceae</taxon>
        <taxon>Parafrankia</taxon>
    </lineage>
</organism>
<comment type="function">
    <text evidence="1">Required for rescue of stalled ribosomes mediated by trans-translation. Binds to transfer-messenger RNA (tmRNA), required for stable association of tmRNA with ribosomes. tmRNA and SmpB together mimic tRNA shape, replacing the anticodon stem-loop with SmpB. tmRNA is encoded by the ssrA gene; the 2 termini fold to resemble tRNA(Ala) and it encodes a 'tag peptide', a short internal open reading frame. During trans-translation Ala-aminoacylated tmRNA acts like a tRNA, entering the A-site of stalled ribosomes, displacing the stalled mRNA. The ribosome then switches to translate the ORF on the tmRNA; the nascent peptide is terminated with the 'tag peptide' encoded by the tmRNA and targeted for degradation. The ribosome is freed to recommence translation, which seems to be the essential function of trans-translation.</text>
</comment>
<comment type="subcellular location">
    <subcellularLocation>
        <location evidence="1">Cytoplasm</location>
    </subcellularLocation>
    <text evidence="1">The tmRNA-SmpB complex associates with stalled 70S ribosomes.</text>
</comment>
<comment type="similarity">
    <text evidence="1">Belongs to the SmpB family.</text>
</comment>
<sequence>MPKETGRKLIAQNKRARHDYDILDTYEAGLVLMGTEVKALRAGRASLVDGFAQIADGEIWLHNVHIPEYTEGTWTNHAPRRRRKLLLHRAEIEKLIGKTREGGLTVVPLSLYFKDGRAKVEIALARGRKNYDKRHALAERDAAREMSRIMGRQAKGRV</sequence>
<evidence type="ECO:0000255" key="1">
    <source>
        <dbReference type="HAMAP-Rule" id="MF_00023"/>
    </source>
</evidence>